<name>RL35_LISMH</name>
<accession>B8DDX3</accession>
<evidence type="ECO:0000255" key="1">
    <source>
        <dbReference type="HAMAP-Rule" id="MF_00514"/>
    </source>
</evidence>
<evidence type="ECO:0000256" key="2">
    <source>
        <dbReference type="SAM" id="MobiDB-lite"/>
    </source>
</evidence>
<evidence type="ECO:0000305" key="3"/>
<comment type="similarity">
    <text evidence="1">Belongs to the bacterial ribosomal protein bL35 family.</text>
</comment>
<organism>
    <name type="scientific">Listeria monocytogenes serotype 4a (strain HCC23)</name>
    <dbReference type="NCBI Taxonomy" id="552536"/>
    <lineage>
        <taxon>Bacteria</taxon>
        <taxon>Bacillati</taxon>
        <taxon>Bacillota</taxon>
        <taxon>Bacilli</taxon>
        <taxon>Bacillales</taxon>
        <taxon>Listeriaceae</taxon>
        <taxon>Listeria</taxon>
    </lineage>
</organism>
<sequence>MPKMKTHRGSAKRFKRTGSGKLKRRHGFTSHMFANKSQKQKRKLRKSAMVSAGDFKRIRQMVAKMK</sequence>
<proteinExistence type="inferred from homology"/>
<feature type="chain" id="PRO_1000194078" description="Large ribosomal subunit protein bL35">
    <location>
        <begin position="1"/>
        <end position="66"/>
    </location>
</feature>
<feature type="region of interest" description="Disordered" evidence="2">
    <location>
        <begin position="1"/>
        <end position="50"/>
    </location>
</feature>
<feature type="compositionally biased region" description="Basic residues" evidence="2">
    <location>
        <begin position="1"/>
        <end position="28"/>
    </location>
</feature>
<protein>
    <recommendedName>
        <fullName evidence="1">Large ribosomal subunit protein bL35</fullName>
    </recommendedName>
    <alternativeName>
        <fullName evidence="3">50S ribosomal protein L35</fullName>
    </alternativeName>
</protein>
<keyword id="KW-0687">Ribonucleoprotein</keyword>
<keyword id="KW-0689">Ribosomal protein</keyword>
<dbReference type="EMBL" id="CP001175">
    <property type="protein sequence ID" value="ACK39132.1"/>
    <property type="molecule type" value="Genomic_DNA"/>
</dbReference>
<dbReference type="RefSeq" id="WP_003720098.1">
    <property type="nucleotide sequence ID" value="NC_011660.1"/>
</dbReference>
<dbReference type="SMR" id="B8DDX3"/>
<dbReference type="GeneID" id="93239693"/>
<dbReference type="KEGG" id="lmh:LMHCC_0778"/>
<dbReference type="HOGENOM" id="CLU_169643_3_0_9"/>
<dbReference type="GO" id="GO:0022625">
    <property type="term" value="C:cytosolic large ribosomal subunit"/>
    <property type="evidence" value="ECO:0007669"/>
    <property type="project" value="TreeGrafter"/>
</dbReference>
<dbReference type="GO" id="GO:0003735">
    <property type="term" value="F:structural constituent of ribosome"/>
    <property type="evidence" value="ECO:0007669"/>
    <property type="project" value="InterPro"/>
</dbReference>
<dbReference type="GO" id="GO:0006412">
    <property type="term" value="P:translation"/>
    <property type="evidence" value="ECO:0007669"/>
    <property type="project" value="UniProtKB-UniRule"/>
</dbReference>
<dbReference type="FunFam" id="4.10.410.60:FF:000001">
    <property type="entry name" value="50S ribosomal protein L35"/>
    <property type="match status" value="1"/>
</dbReference>
<dbReference type="Gene3D" id="4.10.410.60">
    <property type="match status" value="1"/>
</dbReference>
<dbReference type="HAMAP" id="MF_00514">
    <property type="entry name" value="Ribosomal_bL35"/>
    <property type="match status" value="1"/>
</dbReference>
<dbReference type="InterPro" id="IPR001706">
    <property type="entry name" value="Ribosomal_bL35"/>
</dbReference>
<dbReference type="InterPro" id="IPR021137">
    <property type="entry name" value="Ribosomal_bL35-like"/>
</dbReference>
<dbReference type="InterPro" id="IPR018265">
    <property type="entry name" value="Ribosomal_bL35_CS"/>
</dbReference>
<dbReference type="InterPro" id="IPR037229">
    <property type="entry name" value="Ribosomal_bL35_sf"/>
</dbReference>
<dbReference type="NCBIfam" id="TIGR00001">
    <property type="entry name" value="rpmI_bact"/>
    <property type="match status" value="1"/>
</dbReference>
<dbReference type="PANTHER" id="PTHR33343">
    <property type="entry name" value="54S RIBOSOMAL PROTEIN BL35M"/>
    <property type="match status" value="1"/>
</dbReference>
<dbReference type="PANTHER" id="PTHR33343:SF1">
    <property type="entry name" value="LARGE RIBOSOMAL SUBUNIT PROTEIN BL35M"/>
    <property type="match status" value="1"/>
</dbReference>
<dbReference type="Pfam" id="PF01632">
    <property type="entry name" value="Ribosomal_L35p"/>
    <property type="match status" value="1"/>
</dbReference>
<dbReference type="PRINTS" id="PR00064">
    <property type="entry name" value="RIBOSOMALL35"/>
</dbReference>
<dbReference type="SUPFAM" id="SSF143034">
    <property type="entry name" value="L35p-like"/>
    <property type="match status" value="1"/>
</dbReference>
<dbReference type="PROSITE" id="PS00936">
    <property type="entry name" value="RIBOSOMAL_L35"/>
    <property type="match status" value="1"/>
</dbReference>
<gene>
    <name evidence="1" type="primary">rpmI</name>
    <name type="ordered locus">LMHCC_0778</name>
</gene>
<reference key="1">
    <citation type="journal article" date="2011" name="J. Bacteriol.">
        <title>Genome sequence of lineage III Listeria monocytogenes strain HCC23.</title>
        <authorList>
            <person name="Steele C.L."/>
            <person name="Donaldson J.R."/>
            <person name="Paul D."/>
            <person name="Banes M.M."/>
            <person name="Arick T."/>
            <person name="Bridges S.M."/>
            <person name="Lawrence M.L."/>
        </authorList>
    </citation>
    <scope>NUCLEOTIDE SEQUENCE [LARGE SCALE GENOMIC DNA]</scope>
    <source>
        <strain>HCC23</strain>
    </source>
</reference>